<protein>
    <recommendedName>
        <fullName>Bacteriocin thailandicin</fullName>
    </recommendedName>
</protein>
<name>THB_ENTTH</name>
<feature type="chain" id="PRO_0000450686" description="Bacteriocin thailandicin">
    <location>
        <begin position="1"/>
        <end position="86"/>
    </location>
</feature>
<feature type="cross-link" description="Cyclopeptide (Leu-Trp)" evidence="1">
    <location>
        <begin position="23"/>
        <end position="86"/>
    </location>
</feature>
<dbReference type="SMR" id="C0HLR2"/>
<dbReference type="GO" id="GO:0005576">
    <property type="term" value="C:extracellular region"/>
    <property type="evidence" value="ECO:0007669"/>
    <property type="project" value="UniProtKB-SubCell"/>
</dbReference>
<dbReference type="GO" id="GO:0042742">
    <property type="term" value="P:defense response to bacterium"/>
    <property type="evidence" value="ECO:0007669"/>
    <property type="project" value="UniProtKB-KW"/>
</dbReference>
<dbReference type="GO" id="GO:0031640">
    <property type="term" value="P:killing of cells of another organism"/>
    <property type="evidence" value="ECO:0007669"/>
    <property type="project" value="UniProtKB-KW"/>
</dbReference>
<dbReference type="Gene3D" id="1.20.225.10">
    <property type="entry name" value="Bacteriocin AS-48"/>
    <property type="match status" value="1"/>
</dbReference>
<dbReference type="InterPro" id="IPR009086">
    <property type="entry name" value="Bacteriocin_AS48"/>
</dbReference>
<dbReference type="InterPro" id="IPR020038">
    <property type="entry name" value="Circ_bacteriocin"/>
</dbReference>
<dbReference type="NCBIfam" id="TIGR03651">
    <property type="entry name" value="circ_ocin_uber"/>
    <property type="match status" value="1"/>
</dbReference>
<dbReference type="Pfam" id="PF09221">
    <property type="entry name" value="Bacteriocin_IId"/>
    <property type="match status" value="1"/>
</dbReference>
<comment type="function">
    <text evidence="2">Cyclopeptide antibiotic with bacteriolytic activity against the Gram-positive bacteria S.aureus and S.thermophilus, and lower activity against the Gram-negative bacteria E.coli and P.aeruginosa.</text>
</comment>
<comment type="subcellular location">
    <subcellularLocation>
        <location evidence="3">Secreted</location>
    </subcellularLocation>
</comment>
<evidence type="ECO:0000250" key="1">
    <source>
        <dbReference type="UniProtKB" id="A5H1G9"/>
    </source>
</evidence>
<evidence type="ECO:0000269" key="2">
    <source ref="1"/>
</evidence>
<evidence type="ECO:0000305" key="3"/>
<proteinExistence type="evidence at protein level"/>
<keyword id="KW-0044">Antibiotic</keyword>
<keyword id="KW-0929">Antimicrobial</keyword>
<keyword id="KW-0078">Bacteriocin</keyword>
<keyword id="KW-0903">Direct protein sequencing</keyword>
<keyword id="KW-0964">Secreted</keyword>
<sequence length="86" mass="8633">KKNMLLVNPIVGIGGLFVGAPMLTANLGISSYAAKKVIDDINTGSAVATIIALVTAVVGGGLITAGIVATTKSLIKKYGAKYSAAW</sequence>
<organism>
    <name type="scientific">Enterococcus thailandicus</name>
    <dbReference type="NCBI Taxonomy" id="417368"/>
    <lineage>
        <taxon>Bacteria</taxon>
        <taxon>Bacillati</taxon>
        <taxon>Bacillota</taxon>
        <taxon>Bacilli</taxon>
        <taxon>Lactobacillales</taxon>
        <taxon>Enterococcaceae</taxon>
        <taxon>Enterococcus</taxon>
    </lineage>
</organism>
<reference evidence="3" key="1">
    <citation type="submission" date="2020-02" db="UniProtKB">
        <title>Purification and characterization of a hepatotoxic bacteriocin from Enterococcus thailandicus as a potential natural anticancer substance.</title>
        <authorList>
            <person name="Al-Madboly L."/>
            <person name="El-Deeb N."/>
            <person name="Ragab A."/>
            <person name="Kabbash A."/>
            <person name="Kenawy A."/>
        </authorList>
    </citation>
    <scope>PROTEIN SEQUENCE</scope>
    <scope>FUNCTION</scope>
</reference>
<accession>C0HLR2</accession>